<organism>
    <name type="scientific">Escherichia coli (strain K12)</name>
    <dbReference type="NCBI Taxonomy" id="83333"/>
    <lineage>
        <taxon>Bacteria</taxon>
        <taxon>Pseudomonadati</taxon>
        <taxon>Pseudomonadota</taxon>
        <taxon>Gammaproteobacteria</taxon>
        <taxon>Enterobacterales</taxon>
        <taxon>Enterobacteriaceae</taxon>
        <taxon>Escherichia</taxon>
    </lineage>
</organism>
<sequence>MKTWIFICMSIAMLLWFLSTLRRKPSQKKGCIDAIIPAYNEGPCLAQSLDNLLRNPYFCRVICVNDGSTDNTEAVMAEVKRKWGDRFVAVTQKNTGKGGALMNGLNYATCDQVFLSDADTYVPPDQDGMGYMLAEIERGADAVGGIPSTALKGAGLLPHIRATVKLPMIVMKRTLQQLLGGAPFIISGACGMFRTDVLRKFGFSDRTKVEDLDLTWTLVANGYRIRQANRCIVYPQECNSPREEWRRWRRWIVGYAVCMRLHKRLLFSRFGIFSIFPMLLVVLYGVGIYLTTWFNEFITTGPHGVVLAMFPLIWVGVVCVIGAFSAWFHRCWLLVPLAPLSVVYVLLAYAIWIIYGLIAFFTGREPQRDKPTRYSALVEASTAYSQPSVTGTEKLSEA</sequence>
<accession>Q47536</accession>
<accession>P77760</accession>
<accession>Q2MC62</accession>
<reference key="1">
    <citation type="submission" date="1996-05" db="EMBL/GenBank/DDBJ databases">
        <authorList>
            <person name="Nashimoto H."/>
            <person name="Saito N."/>
        </authorList>
    </citation>
    <scope>NUCLEOTIDE SEQUENCE [GENOMIC DNA]</scope>
    <source>
        <strain>K12</strain>
    </source>
</reference>
<reference key="2">
    <citation type="submission" date="1997-01" db="EMBL/GenBank/DDBJ databases">
        <title>Sequence of minutes 4-25 of Escherichia coli.</title>
        <authorList>
            <person name="Chung E."/>
            <person name="Allen E."/>
            <person name="Araujo R."/>
            <person name="Aparicio A.M."/>
            <person name="Davis K."/>
            <person name="Duncan M."/>
            <person name="Federspiel N."/>
            <person name="Hyman R."/>
            <person name="Kalman S."/>
            <person name="Komp C."/>
            <person name="Kurdi O."/>
            <person name="Lew H."/>
            <person name="Lin D."/>
            <person name="Namath A."/>
            <person name="Oefner P."/>
            <person name="Roberts D."/>
            <person name="Schramm S."/>
            <person name="Davis R.W."/>
        </authorList>
    </citation>
    <scope>NUCLEOTIDE SEQUENCE [LARGE SCALE GENOMIC DNA]</scope>
    <source>
        <strain>K12 / MG1655 / ATCC 47076</strain>
    </source>
</reference>
<reference key="3">
    <citation type="journal article" date="1997" name="Science">
        <title>The complete genome sequence of Escherichia coli K-12.</title>
        <authorList>
            <person name="Blattner F.R."/>
            <person name="Plunkett G. III"/>
            <person name="Bloch C.A."/>
            <person name="Perna N.T."/>
            <person name="Burland V."/>
            <person name="Riley M."/>
            <person name="Collado-Vides J."/>
            <person name="Glasner J.D."/>
            <person name="Rode C.K."/>
            <person name="Mayhew G.F."/>
            <person name="Gregor J."/>
            <person name="Davis N.W."/>
            <person name="Kirkpatrick H.A."/>
            <person name="Goeden M.A."/>
            <person name="Rose D.J."/>
            <person name="Mau B."/>
            <person name="Shao Y."/>
        </authorList>
    </citation>
    <scope>NUCLEOTIDE SEQUENCE [LARGE SCALE GENOMIC DNA]</scope>
    <source>
        <strain>K12 / MG1655 / ATCC 47076</strain>
    </source>
</reference>
<reference key="4">
    <citation type="journal article" date="2006" name="Mol. Syst. Biol.">
        <title>Highly accurate genome sequences of Escherichia coli K-12 strains MG1655 and W3110.</title>
        <authorList>
            <person name="Hayashi K."/>
            <person name="Morooka N."/>
            <person name="Yamamoto Y."/>
            <person name="Fujita K."/>
            <person name="Isono K."/>
            <person name="Choi S."/>
            <person name="Ohtsubo E."/>
            <person name="Baba T."/>
            <person name="Wanner B.L."/>
            <person name="Mori H."/>
            <person name="Horiuchi T."/>
        </authorList>
    </citation>
    <scope>NUCLEOTIDE SEQUENCE [LARGE SCALE GENOMIC DNA]</scope>
    <source>
        <strain>K12 / W3110 / ATCC 27325 / DSM 5911</strain>
    </source>
</reference>
<comment type="similarity">
    <text evidence="1">Belongs to the glycosyltransferase 2 family.</text>
</comment>
<evidence type="ECO:0000305" key="1"/>
<protein>
    <recommendedName>
        <fullName>Uncharacterized glycosyltransferase YaiP</fullName>
        <ecNumber evidence="1">2.4.-.-</ecNumber>
    </recommendedName>
</protein>
<dbReference type="EC" id="2.4.-.-" evidence="1"/>
<dbReference type="EMBL" id="D85613">
    <property type="protein sequence ID" value="BAA12837.1"/>
    <property type="molecule type" value="Genomic_DNA"/>
</dbReference>
<dbReference type="EMBL" id="U73857">
    <property type="protein sequence ID" value="AAB18086.1"/>
    <property type="molecule type" value="Genomic_DNA"/>
</dbReference>
<dbReference type="EMBL" id="U00096">
    <property type="protein sequence ID" value="AAC73466.1"/>
    <property type="molecule type" value="Genomic_DNA"/>
</dbReference>
<dbReference type="EMBL" id="AP009048">
    <property type="protein sequence ID" value="BAE76144.1"/>
    <property type="molecule type" value="Genomic_DNA"/>
</dbReference>
<dbReference type="PIR" id="C64764">
    <property type="entry name" value="C64764"/>
</dbReference>
<dbReference type="RefSeq" id="NP_414897.1">
    <property type="nucleotide sequence ID" value="NC_000913.3"/>
</dbReference>
<dbReference type="RefSeq" id="WP_000860444.1">
    <property type="nucleotide sequence ID" value="NZ_LN832404.1"/>
</dbReference>
<dbReference type="SMR" id="Q47536"/>
<dbReference type="BioGRID" id="4259822">
    <property type="interactions" value="257"/>
</dbReference>
<dbReference type="DIP" id="DIP-11277N"/>
<dbReference type="FunCoup" id="Q47536">
    <property type="interactions" value="183"/>
</dbReference>
<dbReference type="IntAct" id="Q47536">
    <property type="interactions" value="3"/>
</dbReference>
<dbReference type="STRING" id="511145.b0363"/>
<dbReference type="CAZy" id="GT2">
    <property type="family name" value="Glycosyltransferase Family 2"/>
</dbReference>
<dbReference type="TCDB" id="4.D.1.1.11">
    <property type="family name" value="the putative vectorial glycosyl polymerization (vgp) family"/>
</dbReference>
<dbReference type="PaxDb" id="511145-b0363"/>
<dbReference type="EnsemblBacteria" id="AAC73466">
    <property type="protein sequence ID" value="AAC73466"/>
    <property type="gene ID" value="b0363"/>
</dbReference>
<dbReference type="GeneID" id="945308"/>
<dbReference type="KEGG" id="ecj:JW0355"/>
<dbReference type="KEGG" id="eco:b0363"/>
<dbReference type="PATRIC" id="fig|1411691.4.peg.1916"/>
<dbReference type="EchoBASE" id="EB3083"/>
<dbReference type="eggNOG" id="COG1215">
    <property type="taxonomic scope" value="Bacteria"/>
</dbReference>
<dbReference type="HOGENOM" id="CLU_055094_0_0_6"/>
<dbReference type="InParanoid" id="Q47536"/>
<dbReference type="OMA" id="LKLFKPW"/>
<dbReference type="OrthoDB" id="9811884at2"/>
<dbReference type="PhylomeDB" id="Q47536"/>
<dbReference type="BioCyc" id="EcoCyc:G6215-MONOMER"/>
<dbReference type="PRO" id="PR:Q47536"/>
<dbReference type="Proteomes" id="UP000000625">
    <property type="component" value="Chromosome"/>
</dbReference>
<dbReference type="GO" id="GO:0016757">
    <property type="term" value="F:glycosyltransferase activity"/>
    <property type="evidence" value="ECO:0007669"/>
    <property type="project" value="UniProtKB-KW"/>
</dbReference>
<dbReference type="GO" id="GO:0016874">
    <property type="term" value="F:ligase activity"/>
    <property type="evidence" value="ECO:0007669"/>
    <property type="project" value="UniProtKB-KW"/>
</dbReference>
<dbReference type="GO" id="GO:0006974">
    <property type="term" value="P:DNA damage response"/>
    <property type="evidence" value="ECO:0000270"/>
    <property type="project" value="EcoliWiki"/>
</dbReference>
<dbReference type="CDD" id="cd06423">
    <property type="entry name" value="CESA_like"/>
    <property type="match status" value="1"/>
</dbReference>
<dbReference type="FunFam" id="3.90.550.10:FF:000155">
    <property type="entry name" value="Polysaccharide metabolism"/>
    <property type="match status" value="1"/>
</dbReference>
<dbReference type="Gene3D" id="3.90.550.10">
    <property type="entry name" value="Spore Coat Polysaccharide Biosynthesis Protein SpsA, Chain A"/>
    <property type="match status" value="1"/>
</dbReference>
<dbReference type="InterPro" id="IPR001173">
    <property type="entry name" value="Glyco_trans_2-like"/>
</dbReference>
<dbReference type="InterPro" id="IPR029044">
    <property type="entry name" value="Nucleotide-diphossugar_trans"/>
</dbReference>
<dbReference type="PANTHER" id="PTHR43630">
    <property type="entry name" value="POLY-BETA-1,6-N-ACETYL-D-GLUCOSAMINE SYNTHASE"/>
    <property type="match status" value="1"/>
</dbReference>
<dbReference type="PANTHER" id="PTHR43630:SF1">
    <property type="entry name" value="POLY-BETA-1,6-N-ACETYL-D-GLUCOSAMINE SYNTHASE"/>
    <property type="match status" value="1"/>
</dbReference>
<dbReference type="Pfam" id="PF00535">
    <property type="entry name" value="Glycos_transf_2"/>
    <property type="match status" value="1"/>
</dbReference>
<dbReference type="SUPFAM" id="SSF53448">
    <property type="entry name" value="Nucleotide-diphospho-sugar transferases"/>
    <property type="match status" value="1"/>
</dbReference>
<proteinExistence type="inferred from homology"/>
<name>YAIP_ECOLI</name>
<keyword id="KW-0328">Glycosyltransferase</keyword>
<keyword id="KW-0436">Ligase</keyword>
<keyword id="KW-1185">Reference proteome</keyword>
<keyword id="KW-0808">Transferase</keyword>
<gene>
    <name type="primary">yaiP</name>
    <name type="ordered locus">b0363</name>
    <name type="ordered locus">JW0355</name>
</gene>
<feature type="chain" id="PRO_0000168594" description="Uncharacterized glycosyltransferase YaiP">
    <location>
        <begin position="1"/>
        <end position="398"/>
    </location>
</feature>
<feature type="sequence conflict" description="In Ref. 1; BAA12837." evidence="1" ref="1">
    <original>IPST</original>
    <variation>HSPLL</variation>
    <location>
        <begin position="146"/>
        <end position="149"/>
    </location>
</feature>